<name>UBIC_PHOLL</name>
<reference key="1">
    <citation type="journal article" date="2003" name="Nat. Biotechnol.">
        <title>The genome sequence of the entomopathogenic bacterium Photorhabdus luminescens.</title>
        <authorList>
            <person name="Duchaud E."/>
            <person name="Rusniok C."/>
            <person name="Frangeul L."/>
            <person name="Buchrieser C."/>
            <person name="Givaudan A."/>
            <person name="Taourit S."/>
            <person name="Bocs S."/>
            <person name="Boursaux-Eude C."/>
            <person name="Chandler M."/>
            <person name="Charles J.-F."/>
            <person name="Dassa E."/>
            <person name="Derose R."/>
            <person name="Derzelle S."/>
            <person name="Freyssinet G."/>
            <person name="Gaudriault S."/>
            <person name="Medigue C."/>
            <person name="Lanois A."/>
            <person name="Powell K."/>
            <person name="Siguier P."/>
            <person name="Vincent R."/>
            <person name="Wingate V."/>
            <person name="Zouine M."/>
            <person name="Glaser P."/>
            <person name="Boemare N."/>
            <person name="Danchin A."/>
            <person name="Kunst F."/>
        </authorList>
    </citation>
    <scope>NUCLEOTIDE SEQUENCE [LARGE SCALE GENOMIC DNA]</scope>
    <source>
        <strain>DSM 15139 / CIP 105565 / TT01</strain>
    </source>
</reference>
<keyword id="KW-0963">Cytoplasm</keyword>
<keyword id="KW-0456">Lyase</keyword>
<keyword id="KW-0670">Pyruvate</keyword>
<keyword id="KW-1185">Reference proteome</keyword>
<keyword id="KW-0831">Ubiquinone biosynthesis</keyword>
<feature type="chain" id="PRO_0000240553" description="Chorismate pyruvate-lyase">
    <location>
        <begin position="1"/>
        <end position="168"/>
    </location>
</feature>
<feature type="binding site" evidence="1">
    <location>
        <position position="36"/>
    </location>
    <ligand>
        <name>substrate</name>
    </ligand>
</feature>
<feature type="binding site" evidence="1">
    <location>
        <position position="78"/>
    </location>
    <ligand>
        <name>substrate</name>
    </ligand>
</feature>
<feature type="binding site" evidence="1">
    <location>
        <position position="116"/>
    </location>
    <ligand>
        <name>substrate</name>
    </ligand>
</feature>
<feature type="binding site" evidence="1">
    <location>
        <position position="157"/>
    </location>
    <ligand>
        <name>substrate</name>
    </ligand>
</feature>
<comment type="function">
    <text evidence="1">Removes the pyruvyl group from chorismate, with concomitant aromatization of the ring, to provide 4-hydroxybenzoate (4HB) for the ubiquinone pathway.</text>
</comment>
<comment type="catalytic activity">
    <reaction evidence="1">
        <text>chorismate = 4-hydroxybenzoate + pyruvate</text>
        <dbReference type="Rhea" id="RHEA:16505"/>
        <dbReference type="ChEBI" id="CHEBI:15361"/>
        <dbReference type="ChEBI" id="CHEBI:17879"/>
        <dbReference type="ChEBI" id="CHEBI:29748"/>
        <dbReference type="EC" id="4.1.3.40"/>
    </reaction>
</comment>
<comment type="pathway">
    <text evidence="1">Cofactor biosynthesis; ubiquinone biosynthesis.</text>
</comment>
<comment type="subunit">
    <text evidence="1">Monomer.</text>
</comment>
<comment type="subcellular location">
    <subcellularLocation>
        <location evidence="1">Cytoplasm</location>
    </subcellularLocation>
</comment>
<comment type="similarity">
    <text evidence="1">Belongs to the UbiC family.</text>
</comment>
<comment type="sequence caution" evidence="2">
    <conflict type="erroneous initiation">
        <sequence resource="EMBL-CDS" id="CAE16750"/>
    </conflict>
    <text>Extended N-terminus.</text>
</comment>
<proteinExistence type="inferred from homology"/>
<gene>
    <name evidence="1" type="primary">ubiC</name>
    <name type="ordered locus">plu4378</name>
</gene>
<evidence type="ECO:0000255" key="1">
    <source>
        <dbReference type="HAMAP-Rule" id="MF_01632"/>
    </source>
</evidence>
<evidence type="ECO:0000305" key="2"/>
<sequence>MSTDSILTTVPIQWLSVDSPVLPDEVLDWLMELGSMTRRFEQYCNSVRIIPFRECFITEEQLSDENERLLTGQRYWLREIVLCGDNIPWLLGRTLIPETTLTGPDESLVDLGTVPLGRYLFSGNKLTRDYIHVGQQGNRWARRSLLRLSGKPLLLTEVFLPESPVYKR</sequence>
<protein>
    <recommendedName>
        <fullName evidence="1">Chorismate pyruvate-lyase</fullName>
        <shortName evidence="1">CL</shortName>
        <shortName evidence="1">CPL</shortName>
        <ecNumber evidence="1">4.1.3.40</ecNumber>
    </recommendedName>
</protein>
<organism>
    <name type="scientific">Photorhabdus laumondii subsp. laumondii (strain DSM 15139 / CIP 105565 / TT01)</name>
    <name type="common">Photorhabdus luminescens subsp. laumondii</name>
    <dbReference type="NCBI Taxonomy" id="243265"/>
    <lineage>
        <taxon>Bacteria</taxon>
        <taxon>Pseudomonadati</taxon>
        <taxon>Pseudomonadota</taxon>
        <taxon>Gammaproteobacteria</taxon>
        <taxon>Enterobacterales</taxon>
        <taxon>Morganellaceae</taxon>
        <taxon>Photorhabdus</taxon>
    </lineage>
</organism>
<accession>Q7MZB5</accession>
<dbReference type="EC" id="4.1.3.40" evidence="1"/>
<dbReference type="EMBL" id="BX571873">
    <property type="protein sequence ID" value="CAE16750.1"/>
    <property type="status" value="ALT_INIT"/>
    <property type="molecule type" value="Genomic_DNA"/>
</dbReference>
<dbReference type="RefSeq" id="WP_011148468.1">
    <property type="nucleotide sequence ID" value="NC_005126.1"/>
</dbReference>
<dbReference type="SMR" id="Q7MZB5"/>
<dbReference type="STRING" id="243265.plu4378"/>
<dbReference type="GeneID" id="48850588"/>
<dbReference type="KEGG" id="plu:plu4378"/>
<dbReference type="eggNOG" id="COG3161">
    <property type="taxonomic scope" value="Bacteria"/>
</dbReference>
<dbReference type="HOGENOM" id="CLU_096824_1_0_6"/>
<dbReference type="OrthoDB" id="9789493at2"/>
<dbReference type="UniPathway" id="UPA00232"/>
<dbReference type="Proteomes" id="UP000002514">
    <property type="component" value="Chromosome"/>
</dbReference>
<dbReference type="GO" id="GO:0005829">
    <property type="term" value="C:cytosol"/>
    <property type="evidence" value="ECO:0007669"/>
    <property type="project" value="TreeGrafter"/>
</dbReference>
<dbReference type="GO" id="GO:0008813">
    <property type="term" value="F:chorismate lyase activity"/>
    <property type="evidence" value="ECO:0007669"/>
    <property type="project" value="UniProtKB-UniRule"/>
</dbReference>
<dbReference type="GO" id="GO:0042866">
    <property type="term" value="P:pyruvate biosynthetic process"/>
    <property type="evidence" value="ECO:0007669"/>
    <property type="project" value="UniProtKB-UniRule"/>
</dbReference>
<dbReference type="GO" id="GO:0006744">
    <property type="term" value="P:ubiquinone biosynthetic process"/>
    <property type="evidence" value="ECO:0007669"/>
    <property type="project" value="UniProtKB-UniRule"/>
</dbReference>
<dbReference type="Gene3D" id="3.40.1410.10">
    <property type="entry name" value="Chorismate lyase-like"/>
    <property type="match status" value="1"/>
</dbReference>
<dbReference type="HAMAP" id="MF_01632">
    <property type="entry name" value="UbiC"/>
    <property type="match status" value="1"/>
</dbReference>
<dbReference type="InterPro" id="IPR007440">
    <property type="entry name" value="Chorismate--pyruvate_lyase"/>
</dbReference>
<dbReference type="InterPro" id="IPR028978">
    <property type="entry name" value="Chorismate_lyase_/UTRA_dom_sf"/>
</dbReference>
<dbReference type="NCBIfam" id="NF008656">
    <property type="entry name" value="PRK11655.1"/>
    <property type="match status" value="1"/>
</dbReference>
<dbReference type="PANTHER" id="PTHR38683">
    <property type="entry name" value="CHORISMATE PYRUVATE-LYASE"/>
    <property type="match status" value="1"/>
</dbReference>
<dbReference type="PANTHER" id="PTHR38683:SF1">
    <property type="entry name" value="CHORISMATE PYRUVATE-LYASE"/>
    <property type="match status" value="1"/>
</dbReference>
<dbReference type="Pfam" id="PF04345">
    <property type="entry name" value="Chor_lyase"/>
    <property type="match status" value="1"/>
</dbReference>
<dbReference type="SUPFAM" id="SSF64288">
    <property type="entry name" value="Chorismate lyase-like"/>
    <property type="match status" value="1"/>
</dbReference>